<reference key="1">
    <citation type="journal article" date="2008" name="PLoS ONE">
        <title>Genome sequence of the saprophyte Leptospira biflexa provides insights into the evolution of Leptospira and the pathogenesis of leptospirosis.</title>
        <authorList>
            <person name="Picardeau M."/>
            <person name="Bulach D.M."/>
            <person name="Bouchier C."/>
            <person name="Zuerner R.L."/>
            <person name="Zidane N."/>
            <person name="Wilson P.J."/>
            <person name="Creno S."/>
            <person name="Kuczek E.S."/>
            <person name="Bommezzadri S."/>
            <person name="Davis J.C."/>
            <person name="McGrath A."/>
            <person name="Johnson M.J."/>
            <person name="Boursaux-Eude C."/>
            <person name="Seemann T."/>
            <person name="Rouy Z."/>
            <person name="Coppel R.L."/>
            <person name="Rood J.I."/>
            <person name="Lajus A."/>
            <person name="Davies J.K."/>
            <person name="Medigue C."/>
            <person name="Adler B."/>
        </authorList>
    </citation>
    <scope>NUCLEOTIDE SEQUENCE [LARGE SCALE GENOMIC DNA]</scope>
    <source>
        <strain>Patoc 1 / Ames</strain>
    </source>
</reference>
<evidence type="ECO:0000255" key="1">
    <source>
        <dbReference type="HAMAP-Rule" id="MF_00044"/>
    </source>
</evidence>
<dbReference type="EC" id="6.1.1.12" evidence="1"/>
<dbReference type="EMBL" id="CP000777">
    <property type="protein sequence ID" value="ABZ94541.1"/>
    <property type="molecule type" value="Genomic_DNA"/>
</dbReference>
<dbReference type="RefSeq" id="WP_012389067.1">
    <property type="nucleotide sequence ID" value="NC_010842.1"/>
</dbReference>
<dbReference type="SMR" id="B0SB35"/>
<dbReference type="KEGG" id="lbf:LBF_2041"/>
<dbReference type="HOGENOM" id="CLU_014330_3_2_12"/>
<dbReference type="GO" id="GO:0005737">
    <property type="term" value="C:cytoplasm"/>
    <property type="evidence" value="ECO:0007669"/>
    <property type="project" value="UniProtKB-SubCell"/>
</dbReference>
<dbReference type="GO" id="GO:0004815">
    <property type="term" value="F:aspartate-tRNA ligase activity"/>
    <property type="evidence" value="ECO:0007669"/>
    <property type="project" value="UniProtKB-UniRule"/>
</dbReference>
<dbReference type="GO" id="GO:0005524">
    <property type="term" value="F:ATP binding"/>
    <property type="evidence" value="ECO:0007669"/>
    <property type="project" value="UniProtKB-UniRule"/>
</dbReference>
<dbReference type="GO" id="GO:0003676">
    <property type="term" value="F:nucleic acid binding"/>
    <property type="evidence" value="ECO:0007669"/>
    <property type="project" value="InterPro"/>
</dbReference>
<dbReference type="GO" id="GO:0006422">
    <property type="term" value="P:aspartyl-tRNA aminoacylation"/>
    <property type="evidence" value="ECO:0007669"/>
    <property type="project" value="UniProtKB-UniRule"/>
</dbReference>
<dbReference type="CDD" id="cd00777">
    <property type="entry name" value="AspRS_core"/>
    <property type="match status" value="1"/>
</dbReference>
<dbReference type="CDD" id="cd04317">
    <property type="entry name" value="EcAspRS_like_N"/>
    <property type="match status" value="1"/>
</dbReference>
<dbReference type="Gene3D" id="3.30.930.10">
    <property type="entry name" value="Bira Bifunctional Protein, Domain 2"/>
    <property type="match status" value="1"/>
</dbReference>
<dbReference type="Gene3D" id="3.30.1360.30">
    <property type="entry name" value="GAD-like domain"/>
    <property type="match status" value="1"/>
</dbReference>
<dbReference type="Gene3D" id="2.40.50.140">
    <property type="entry name" value="Nucleic acid-binding proteins"/>
    <property type="match status" value="1"/>
</dbReference>
<dbReference type="HAMAP" id="MF_00044">
    <property type="entry name" value="Asp_tRNA_synth_type1"/>
    <property type="match status" value="1"/>
</dbReference>
<dbReference type="InterPro" id="IPR004364">
    <property type="entry name" value="Aa-tRNA-synt_II"/>
</dbReference>
<dbReference type="InterPro" id="IPR006195">
    <property type="entry name" value="aa-tRNA-synth_II"/>
</dbReference>
<dbReference type="InterPro" id="IPR045864">
    <property type="entry name" value="aa-tRNA-synth_II/BPL/LPL"/>
</dbReference>
<dbReference type="InterPro" id="IPR004524">
    <property type="entry name" value="Asp-tRNA-ligase_1"/>
</dbReference>
<dbReference type="InterPro" id="IPR047089">
    <property type="entry name" value="Asp-tRNA-ligase_1_N"/>
</dbReference>
<dbReference type="InterPro" id="IPR002312">
    <property type="entry name" value="Asp/Asn-tRNA-synth_IIb"/>
</dbReference>
<dbReference type="InterPro" id="IPR047090">
    <property type="entry name" value="AspRS_core"/>
</dbReference>
<dbReference type="InterPro" id="IPR004115">
    <property type="entry name" value="GAD-like_sf"/>
</dbReference>
<dbReference type="InterPro" id="IPR029351">
    <property type="entry name" value="GAD_dom"/>
</dbReference>
<dbReference type="InterPro" id="IPR012340">
    <property type="entry name" value="NA-bd_OB-fold"/>
</dbReference>
<dbReference type="InterPro" id="IPR004365">
    <property type="entry name" value="NA-bd_OB_tRNA"/>
</dbReference>
<dbReference type="NCBIfam" id="TIGR00459">
    <property type="entry name" value="aspS_bact"/>
    <property type="match status" value="1"/>
</dbReference>
<dbReference type="NCBIfam" id="NF001750">
    <property type="entry name" value="PRK00476.1"/>
    <property type="match status" value="1"/>
</dbReference>
<dbReference type="PANTHER" id="PTHR22594:SF5">
    <property type="entry name" value="ASPARTATE--TRNA LIGASE, MITOCHONDRIAL"/>
    <property type="match status" value="1"/>
</dbReference>
<dbReference type="PANTHER" id="PTHR22594">
    <property type="entry name" value="ASPARTYL/LYSYL-TRNA SYNTHETASE"/>
    <property type="match status" value="1"/>
</dbReference>
<dbReference type="Pfam" id="PF02938">
    <property type="entry name" value="GAD"/>
    <property type="match status" value="1"/>
</dbReference>
<dbReference type="Pfam" id="PF00152">
    <property type="entry name" value="tRNA-synt_2"/>
    <property type="match status" value="1"/>
</dbReference>
<dbReference type="Pfam" id="PF01336">
    <property type="entry name" value="tRNA_anti-codon"/>
    <property type="match status" value="1"/>
</dbReference>
<dbReference type="PRINTS" id="PR01042">
    <property type="entry name" value="TRNASYNTHASP"/>
</dbReference>
<dbReference type="SUPFAM" id="SSF55681">
    <property type="entry name" value="Class II aaRS and biotin synthetases"/>
    <property type="match status" value="1"/>
</dbReference>
<dbReference type="SUPFAM" id="SSF55261">
    <property type="entry name" value="GAD domain-like"/>
    <property type="match status" value="1"/>
</dbReference>
<dbReference type="SUPFAM" id="SSF50249">
    <property type="entry name" value="Nucleic acid-binding proteins"/>
    <property type="match status" value="1"/>
</dbReference>
<dbReference type="PROSITE" id="PS50862">
    <property type="entry name" value="AA_TRNA_LIGASE_II"/>
    <property type="match status" value="1"/>
</dbReference>
<accession>B0SB35</accession>
<gene>
    <name evidence="1" type="primary">aspS</name>
    <name type="ordered locus">LBF_2041</name>
</gene>
<organism>
    <name type="scientific">Leptospira biflexa serovar Patoc (strain Patoc 1 / Ames)</name>
    <dbReference type="NCBI Taxonomy" id="355278"/>
    <lineage>
        <taxon>Bacteria</taxon>
        <taxon>Pseudomonadati</taxon>
        <taxon>Spirochaetota</taxon>
        <taxon>Spirochaetia</taxon>
        <taxon>Leptospirales</taxon>
        <taxon>Leptospiraceae</taxon>
        <taxon>Leptospira</taxon>
    </lineage>
</organism>
<name>SYD_LEPBA</name>
<protein>
    <recommendedName>
        <fullName evidence="1">Aspartate--tRNA ligase</fullName>
        <ecNumber evidence="1">6.1.1.12</ecNumber>
    </recommendedName>
    <alternativeName>
        <fullName evidence="1">Aspartyl-tRNA synthetase</fullName>
        <shortName evidence="1">AspRS</shortName>
    </alternativeName>
</protein>
<comment type="function">
    <text evidence="1">Catalyzes the attachment of L-aspartate to tRNA(Asp) in a two-step reaction: L-aspartate is first activated by ATP to form Asp-AMP and then transferred to the acceptor end of tRNA(Asp).</text>
</comment>
<comment type="catalytic activity">
    <reaction evidence="1">
        <text>tRNA(Asp) + L-aspartate + ATP = L-aspartyl-tRNA(Asp) + AMP + diphosphate</text>
        <dbReference type="Rhea" id="RHEA:19649"/>
        <dbReference type="Rhea" id="RHEA-COMP:9660"/>
        <dbReference type="Rhea" id="RHEA-COMP:9678"/>
        <dbReference type="ChEBI" id="CHEBI:29991"/>
        <dbReference type="ChEBI" id="CHEBI:30616"/>
        <dbReference type="ChEBI" id="CHEBI:33019"/>
        <dbReference type="ChEBI" id="CHEBI:78442"/>
        <dbReference type="ChEBI" id="CHEBI:78516"/>
        <dbReference type="ChEBI" id="CHEBI:456215"/>
        <dbReference type="EC" id="6.1.1.12"/>
    </reaction>
</comment>
<comment type="subunit">
    <text evidence="1">Homodimer.</text>
</comment>
<comment type="subcellular location">
    <subcellularLocation>
        <location evidence="1">Cytoplasm</location>
    </subcellularLocation>
</comment>
<comment type="similarity">
    <text evidence="1">Belongs to the class-II aminoacyl-tRNA synthetase family. Type 1 subfamily.</text>
</comment>
<proteinExistence type="inferred from homology"/>
<sequence>MNQWVTSEYKNRISATSVSDASVGKTLFLSGWAFRYRDQGGVIFIDLRDRSGILQIVARKEILGDDFSKVEKIRSEFVIAVKGKLSLRDADSINPKMETGKYELIAESVEILNSSKTPPFTLDEFDPSGEEIRLKYRYLDMRREELRDRLVLRHKLTFALREYLDSKSFLEIETPILNKSTPEGARDFLVPSRLNAGEFYALPQSPQLFKQILMIGGMERYFQIVKCFRDEDLRADRQPEFTQLDMEFSFVTEEDIRREIEAMWAFALKKVFQLEVNAPFMTMPYHVAMEEYGSDKPDIRFGMKLVNVSEHVKSCDFQVFTGAITSGGVVKAICVPGGSVISRKEIEDLTAWLSRDYRAKGLAYMKHGANGLESTITKRFSPEALEAIAKAVGSKEGDMVFFGADSSKIVNASLGALRLKLSEKYDPPKVPYSFHWVVDFPMFEIDETTKSWTFLHHPFTSPKEEDFQKLRDWKDGKEVDLSSIGAKAYDLVLNGTEIGGGSIRIHNPEIQSLVLEAIGIGEEDAKSKFGFLLDALSFGAPPHGGIAFGVDRIMMLLTGGTSIRDVIAFPKTQKGTCMMSEAPGPVEAKQLEELKLRVVTI</sequence>
<keyword id="KW-0030">Aminoacyl-tRNA synthetase</keyword>
<keyword id="KW-0067">ATP-binding</keyword>
<keyword id="KW-0963">Cytoplasm</keyword>
<keyword id="KW-0436">Ligase</keyword>
<keyword id="KW-0547">Nucleotide-binding</keyword>
<keyword id="KW-0648">Protein biosynthesis</keyword>
<feature type="chain" id="PRO_1000091007" description="Aspartate--tRNA ligase">
    <location>
        <begin position="1"/>
        <end position="601"/>
    </location>
</feature>
<feature type="region of interest" description="Aspartate" evidence="1">
    <location>
        <begin position="207"/>
        <end position="210"/>
    </location>
</feature>
<feature type="binding site" evidence="1">
    <location>
        <position position="183"/>
    </location>
    <ligand>
        <name>L-aspartate</name>
        <dbReference type="ChEBI" id="CHEBI:29991"/>
    </ligand>
</feature>
<feature type="binding site" evidence="1">
    <location>
        <begin position="229"/>
        <end position="231"/>
    </location>
    <ligand>
        <name>ATP</name>
        <dbReference type="ChEBI" id="CHEBI:30616"/>
    </ligand>
</feature>
<feature type="binding site" evidence="1">
    <location>
        <position position="229"/>
    </location>
    <ligand>
        <name>L-aspartate</name>
        <dbReference type="ChEBI" id="CHEBI:29991"/>
    </ligand>
</feature>
<feature type="binding site" evidence="1">
    <location>
        <position position="238"/>
    </location>
    <ligand>
        <name>ATP</name>
        <dbReference type="ChEBI" id="CHEBI:30616"/>
    </ligand>
</feature>
<feature type="binding site" evidence="1">
    <location>
        <position position="456"/>
    </location>
    <ligand>
        <name>L-aspartate</name>
        <dbReference type="ChEBI" id="CHEBI:29991"/>
    </ligand>
</feature>
<feature type="binding site" evidence="1">
    <location>
        <position position="497"/>
    </location>
    <ligand>
        <name>ATP</name>
        <dbReference type="ChEBI" id="CHEBI:30616"/>
    </ligand>
</feature>
<feature type="binding site" evidence="1">
    <location>
        <position position="504"/>
    </location>
    <ligand>
        <name>L-aspartate</name>
        <dbReference type="ChEBI" id="CHEBI:29991"/>
    </ligand>
</feature>
<feature type="binding site" evidence="1">
    <location>
        <begin position="549"/>
        <end position="552"/>
    </location>
    <ligand>
        <name>ATP</name>
        <dbReference type="ChEBI" id="CHEBI:30616"/>
    </ligand>
</feature>